<evidence type="ECO:0000255" key="1">
    <source>
        <dbReference type="HAMAP-Rule" id="MF_01707"/>
    </source>
</evidence>
<accession>Q0BWF7</accession>
<gene>
    <name evidence="1" type="primary">ccmA</name>
    <name type="ordered locus">HNE_3515</name>
</gene>
<feature type="chain" id="PRO_0000271929" description="Cytochrome c biogenesis ATP-binding export protein CcmA">
    <location>
        <begin position="1"/>
        <end position="193"/>
    </location>
</feature>
<feature type="domain" description="ABC transporter" evidence="1">
    <location>
        <begin position="9"/>
        <end position="191"/>
    </location>
</feature>
<feature type="binding site" evidence="1">
    <location>
        <begin position="41"/>
        <end position="48"/>
    </location>
    <ligand>
        <name>ATP</name>
        <dbReference type="ChEBI" id="CHEBI:30616"/>
    </ligand>
</feature>
<reference key="1">
    <citation type="journal article" date="2006" name="J. Bacteriol.">
        <title>Comparative genomic evidence for a close relationship between the dimorphic prosthecate bacteria Hyphomonas neptunium and Caulobacter crescentus.</title>
        <authorList>
            <person name="Badger J.H."/>
            <person name="Hoover T.R."/>
            <person name="Brun Y.V."/>
            <person name="Weiner R.M."/>
            <person name="Laub M.T."/>
            <person name="Alexandre G."/>
            <person name="Mrazek J."/>
            <person name="Ren Q."/>
            <person name="Paulsen I.T."/>
            <person name="Nelson K.E."/>
            <person name="Khouri H.M."/>
            <person name="Radune D."/>
            <person name="Sosa J."/>
            <person name="Dodson R.J."/>
            <person name="Sullivan S.A."/>
            <person name="Rosovitz M.J."/>
            <person name="Madupu R."/>
            <person name="Brinkac L.M."/>
            <person name="Durkin A.S."/>
            <person name="Daugherty S.C."/>
            <person name="Kothari S.P."/>
            <person name="Giglio M.G."/>
            <person name="Zhou L."/>
            <person name="Haft D.H."/>
            <person name="Selengut J.D."/>
            <person name="Davidsen T.M."/>
            <person name="Yang Q."/>
            <person name="Zafar N."/>
            <person name="Ward N.L."/>
        </authorList>
    </citation>
    <scope>NUCLEOTIDE SEQUENCE [LARGE SCALE GENOMIC DNA]</scope>
    <source>
        <strain>ATCC 15444</strain>
    </source>
</reference>
<proteinExistence type="inferred from homology"/>
<comment type="function">
    <text evidence="1">Part of the ABC transporter complex CcmAB involved in the biogenesis of c-type cytochromes; once thought to export heme, this seems not to be the case, but its exact role is uncertain. Responsible for energy coupling to the transport system.</text>
</comment>
<comment type="catalytic activity">
    <reaction evidence="1">
        <text>heme b(in) + ATP + H2O = heme b(out) + ADP + phosphate + H(+)</text>
        <dbReference type="Rhea" id="RHEA:19261"/>
        <dbReference type="ChEBI" id="CHEBI:15377"/>
        <dbReference type="ChEBI" id="CHEBI:15378"/>
        <dbReference type="ChEBI" id="CHEBI:30616"/>
        <dbReference type="ChEBI" id="CHEBI:43474"/>
        <dbReference type="ChEBI" id="CHEBI:60344"/>
        <dbReference type="ChEBI" id="CHEBI:456216"/>
        <dbReference type="EC" id="7.6.2.5"/>
    </reaction>
</comment>
<comment type="subunit">
    <text evidence="1">The complex is composed of two ATP-binding proteins (CcmA) and two transmembrane proteins (CcmB).</text>
</comment>
<comment type="subcellular location">
    <subcellularLocation>
        <location evidence="1">Cell inner membrane</location>
        <topology evidence="1">Peripheral membrane protein</topology>
    </subcellularLocation>
</comment>
<comment type="similarity">
    <text evidence="1">Belongs to the ABC transporter superfamily. CcmA exporter (TC 3.A.1.107) family.</text>
</comment>
<name>CCMA_HYPNA</name>
<sequence>MTVSTAPLLSASGLAILRGERVLFRGIGLTLQPGEAIVLRGANGAGKTTLLRMLAGLTRPEAGEIARPAAHHWIGHKEGIKPQETPRIHLALWAKAWGSSASIADILDQLALTRAADVPGRYLSAGQRRRTAFARLLLEARPLWLLDEPYTALDAAGKTMLDQVISGHLRTGGAIIASMHDAAGFPVTAEVTL</sequence>
<protein>
    <recommendedName>
        <fullName evidence="1">Cytochrome c biogenesis ATP-binding export protein CcmA</fullName>
        <ecNumber evidence="1">7.6.2.5</ecNumber>
    </recommendedName>
    <alternativeName>
        <fullName evidence="1">Heme exporter protein A</fullName>
    </alternativeName>
</protein>
<dbReference type="EC" id="7.6.2.5" evidence="1"/>
<dbReference type="EMBL" id="CP000158">
    <property type="protein sequence ID" value="ABI78336.1"/>
    <property type="molecule type" value="Genomic_DNA"/>
</dbReference>
<dbReference type="RefSeq" id="WP_011648480.1">
    <property type="nucleotide sequence ID" value="NC_008358.1"/>
</dbReference>
<dbReference type="SMR" id="Q0BWF7"/>
<dbReference type="STRING" id="228405.HNE_3515"/>
<dbReference type="KEGG" id="hne:HNE_3515"/>
<dbReference type="eggNOG" id="COG4133">
    <property type="taxonomic scope" value="Bacteria"/>
</dbReference>
<dbReference type="HOGENOM" id="CLU_000604_1_2_5"/>
<dbReference type="Proteomes" id="UP000001959">
    <property type="component" value="Chromosome"/>
</dbReference>
<dbReference type="GO" id="GO:0005886">
    <property type="term" value="C:plasma membrane"/>
    <property type="evidence" value="ECO:0007669"/>
    <property type="project" value="UniProtKB-SubCell"/>
</dbReference>
<dbReference type="GO" id="GO:0015439">
    <property type="term" value="F:ABC-type heme transporter activity"/>
    <property type="evidence" value="ECO:0007669"/>
    <property type="project" value="UniProtKB-EC"/>
</dbReference>
<dbReference type="GO" id="GO:0005524">
    <property type="term" value="F:ATP binding"/>
    <property type="evidence" value="ECO:0007669"/>
    <property type="project" value="UniProtKB-KW"/>
</dbReference>
<dbReference type="GO" id="GO:0016887">
    <property type="term" value="F:ATP hydrolysis activity"/>
    <property type="evidence" value="ECO:0007669"/>
    <property type="project" value="InterPro"/>
</dbReference>
<dbReference type="GO" id="GO:0017004">
    <property type="term" value="P:cytochrome complex assembly"/>
    <property type="evidence" value="ECO:0007669"/>
    <property type="project" value="UniProtKB-KW"/>
</dbReference>
<dbReference type="Gene3D" id="3.40.50.300">
    <property type="entry name" value="P-loop containing nucleotide triphosphate hydrolases"/>
    <property type="match status" value="1"/>
</dbReference>
<dbReference type="InterPro" id="IPR003593">
    <property type="entry name" value="AAA+_ATPase"/>
</dbReference>
<dbReference type="InterPro" id="IPR003439">
    <property type="entry name" value="ABC_transporter-like_ATP-bd"/>
</dbReference>
<dbReference type="InterPro" id="IPR005895">
    <property type="entry name" value="ABC_transptr_haem_export_CcmA"/>
</dbReference>
<dbReference type="InterPro" id="IPR027417">
    <property type="entry name" value="P-loop_NTPase"/>
</dbReference>
<dbReference type="NCBIfam" id="TIGR01189">
    <property type="entry name" value="ccmA"/>
    <property type="match status" value="1"/>
</dbReference>
<dbReference type="PANTHER" id="PTHR43499">
    <property type="entry name" value="ABC TRANSPORTER I FAMILY MEMBER 1"/>
    <property type="match status" value="1"/>
</dbReference>
<dbReference type="PANTHER" id="PTHR43499:SF1">
    <property type="entry name" value="ABC TRANSPORTER I FAMILY MEMBER 1"/>
    <property type="match status" value="1"/>
</dbReference>
<dbReference type="Pfam" id="PF00005">
    <property type="entry name" value="ABC_tran"/>
    <property type="match status" value="1"/>
</dbReference>
<dbReference type="SMART" id="SM00382">
    <property type="entry name" value="AAA"/>
    <property type="match status" value="1"/>
</dbReference>
<dbReference type="SUPFAM" id="SSF52540">
    <property type="entry name" value="P-loop containing nucleoside triphosphate hydrolases"/>
    <property type="match status" value="1"/>
</dbReference>
<dbReference type="PROSITE" id="PS50893">
    <property type="entry name" value="ABC_TRANSPORTER_2"/>
    <property type="match status" value="1"/>
</dbReference>
<dbReference type="PROSITE" id="PS51243">
    <property type="entry name" value="CCMA"/>
    <property type="match status" value="1"/>
</dbReference>
<keyword id="KW-0067">ATP-binding</keyword>
<keyword id="KW-0997">Cell inner membrane</keyword>
<keyword id="KW-1003">Cell membrane</keyword>
<keyword id="KW-0201">Cytochrome c-type biogenesis</keyword>
<keyword id="KW-0472">Membrane</keyword>
<keyword id="KW-0547">Nucleotide-binding</keyword>
<keyword id="KW-1185">Reference proteome</keyword>
<keyword id="KW-1278">Translocase</keyword>
<keyword id="KW-0813">Transport</keyword>
<organism>
    <name type="scientific">Hyphomonas neptunium (strain ATCC 15444)</name>
    <dbReference type="NCBI Taxonomy" id="228405"/>
    <lineage>
        <taxon>Bacteria</taxon>
        <taxon>Pseudomonadati</taxon>
        <taxon>Pseudomonadota</taxon>
        <taxon>Alphaproteobacteria</taxon>
        <taxon>Hyphomonadales</taxon>
        <taxon>Hyphomonadaceae</taxon>
        <taxon>Hyphomonas</taxon>
    </lineage>
</organism>